<protein>
    <recommendedName>
        <fullName evidence="1">Endonuclease NucS</fullName>
        <ecNumber evidence="1">3.1.-.-</ecNumber>
    </recommendedName>
</protein>
<comment type="function">
    <text evidence="1">Cleaves both 3' and 5' ssDNA extremities of branched DNA structures.</text>
</comment>
<comment type="subcellular location">
    <subcellularLocation>
        <location evidence="1">Cytoplasm</location>
    </subcellularLocation>
</comment>
<comment type="similarity">
    <text evidence="1">Belongs to the NucS endonuclease family.</text>
</comment>
<organism>
    <name type="scientific">Pyrococcus horikoshii (strain ATCC 700860 / DSM 12428 / JCM 9974 / NBRC 100139 / OT-3)</name>
    <dbReference type="NCBI Taxonomy" id="70601"/>
    <lineage>
        <taxon>Archaea</taxon>
        <taxon>Methanobacteriati</taxon>
        <taxon>Methanobacteriota</taxon>
        <taxon>Thermococci</taxon>
        <taxon>Thermococcales</taxon>
        <taxon>Thermococcaceae</taxon>
        <taxon>Pyrococcus</taxon>
    </lineage>
</organism>
<gene>
    <name evidence="1" type="primary">nucS</name>
    <name type="ordered locus">PH0128</name>
</gene>
<proteinExistence type="inferred from homology"/>
<accession>O57868</accession>
<feature type="chain" id="PRO_0000155697" description="Endonuclease NucS">
    <location>
        <begin position="1"/>
        <end position="253"/>
    </location>
</feature>
<keyword id="KW-0963">Cytoplasm</keyword>
<keyword id="KW-0238">DNA-binding</keyword>
<keyword id="KW-0255">Endonuclease</keyword>
<keyword id="KW-0378">Hydrolase</keyword>
<keyword id="KW-0540">Nuclease</keyword>
<sequence length="253" mass="29058">MKKVITRENPTVEEVKELLDIAEKHGGVVTIFARCRVYYEGRAKSELGEGDRIVIIKPDGSFLIHQNKKREPVNWQPPGSKVSMRENSIISIRRKPHERLEVELMEVYAVTVFLAEDYEELALTGSEAEMAKLIFENPNVIEEGFKPMFREKQIKHGIVDIMGLDKDGNIVVLELKRRKADLHAVSQLKRYVDSLKEEYGEKVRGILVAPSLTEGAKKLLEKEGLEFRKLEPPKNNDNKREVKQKTLDFFTPC</sequence>
<evidence type="ECO:0000255" key="1">
    <source>
        <dbReference type="HAMAP-Rule" id="MF_00722"/>
    </source>
</evidence>
<reference key="1">
    <citation type="journal article" date="1998" name="DNA Res.">
        <title>Complete sequence and gene organization of the genome of a hyper-thermophilic archaebacterium, Pyrococcus horikoshii OT3.</title>
        <authorList>
            <person name="Kawarabayasi Y."/>
            <person name="Sawada M."/>
            <person name="Horikawa H."/>
            <person name="Haikawa Y."/>
            <person name="Hino Y."/>
            <person name="Yamamoto S."/>
            <person name="Sekine M."/>
            <person name="Baba S."/>
            <person name="Kosugi H."/>
            <person name="Hosoyama A."/>
            <person name="Nagai Y."/>
            <person name="Sakai M."/>
            <person name="Ogura K."/>
            <person name="Otsuka R."/>
            <person name="Nakazawa H."/>
            <person name="Takamiya M."/>
            <person name="Ohfuku Y."/>
            <person name="Funahashi T."/>
            <person name="Tanaka T."/>
            <person name="Kudoh Y."/>
            <person name="Yamazaki J."/>
            <person name="Kushida N."/>
            <person name="Oguchi A."/>
            <person name="Aoki K."/>
            <person name="Yoshizawa T."/>
            <person name="Nakamura Y."/>
            <person name="Robb F.T."/>
            <person name="Horikoshi K."/>
            <person name="Masuchi Y."/>
            <person name="Shizuya H."/>
            <person name="Kikuchi H."/>
        </authorList>
    </citation>
    <scope>NUCLEOTIDE SEQUENCE [LARGE SCALE GENOMIC DNA]</scope>
    <source>
        <strain>ATCC 700860 / DSM 12428 / JCM 9974 / NBRC 100139 / OT-3</strain>
    </source>
</reference>
<dbReference type="EC" id="3.1.-.-" evidence="1"/>
<dbReference type="EMBL" id="BA000001">
    <property type="protein sequence ID" value="BAA29197.1"/>
    <property type="molecule type" value="Genomic_DNA"/>
</dbReference>
<dbReference type="PIR" id="F71233">
    <property type="entry name" value="F71233"/>
</dbReference>
<dbReference type="RefSeq" id="WP_010884242.1">
    <property type="nucleotide sequence ID" value="NC_000961.1"/>
</dbReference>
<dbReference type="SMR" id="O57868"/>
<dbReference type="STRING" id="70601.gene:9377036"/>
<dbReference type="EnsemblBacteria" id="BAA29197">
    <property type="protein sequence ID" value="BAA29197"/>
    <property type="gene ID" value="BAA29197"/>
</dbReference>
<dbReference type="GeneID" id="1444024"/>
<dbReference type="KEGG" id="pho:PH0128"/>
<dbReference type="eggNOG" id="arCOG01304">
    <property type="taxonomic scope" value="Archaea"/>
</dbReference>
<dbReference type="OrthoDB" id="15177at2157"/>
<dbReference type="Proteomes" id="UP000000752">
    <property type="component" value="Chromosome"/>
</dbReference>
<dbReference type="GO" id="GO:0005737">
    <property type="term" value="C:cytoplasm"/>
    <property type="evidence" value="ECO:0007669"/>
    <property type="project" value="UniProtKB-SubCell"/>
</dbReference>
<dbReference type="GO" id="GO:0003677">
    <property type="term" value="F:DNA binding"/>
    <property type="evidence" value="ECO:0007669"/>
    <property type="project" value="UniProtKB-KW"/>
</dbReference>
<dbReference type="GO" id="GO:0000014">
    <property type="term" value="F:single-stranded DNA endodeoxyribonuclease activity"/>
    <property type="evidence" value="ECO:0007669"/>
    <property type="project" value="UniProtKB-UniRule"/>
</dbReference>
<dbReference type="CDD" id="cd22341">
    <property type="entry name" value="NucS-like"/>
    <property type="match status" value="1"/>
</dbReference>
<dbReference type="Gene3D" id="2.70.180.20">
    <property type="match status" value="1"/>
</dbReference>
<dbReference type="Gene3D" id="3.40.1350.10">
    <property type="match status" value="1"/>
</dbReference>
<dbReference type="HAMAP" id="MF_00722">
    <property type="entry name" value="NucS"/>
    <property type="match status" value="1"/>
</dbReference>
<dbReference type="InterPro" id="IPR002793">
    <property type="entry name" value="Endonuclease_NucS"/>
</dbReference>
<dbReference type="InterPro" id="IPR048301">
    <property type="entry name" value="NucS_C"/>
</dbReference>
<dbReference type="InterPro" id="IPR048302">
    <property type="entry name" value="NucS_N"/>
</dbReference>
<dbReference type="InterPro" id="IPR049173">
    <property type="entry name" value="NucS_N_sf"/>
</dbReference>
<dbReference type="InterPro" id="IPR011856">
    <property type="entry name" value="tRNA_endonuc-like_dom_sf"/>
</dbReference>
<dbReference type="NCBIfam" id="NF003270">
    <property type="entry name" value="PRK04247.1"/>
    <property type="match status" value="1"/>
</dbReference>
<dbReference type="PANTHER" id="PTHR38814">
    <property type="entry name" value="ENDONUCLEASE NUCS"/>
    <property type="match status" value="1"/>
</dbReference>
<dbReference type="PANTHER" id="PTHR38814:SF1">
    <property type="entry name" value="ENDONUCLEASE NUCS"/>
    <property type="match status" value="1"/>
</dbReference>
<dbReference type="Pfam" id="PF01939">
    <property type="entry name" value="NucS_C"/>
    <property type="match status" value="1"/>
</dbReference>
<dbReference type="Pfam" id="PF21003">
    <property type="entry name" value="NucS_N"/>
    <property type="match status" value="1"/>
</dbReference>
<name>NUCS_PYRHO</name>